<accession>P44048</accession>
<sequence>MARTVFCEYLKKEAEGLDFQLYPGELGKRIFDSVSKQAWGEWIKKQTMLVNEKKLNMMNAEHRKLLEQEMVNFLFEGKDVHIEGYVPPSN</sequence>
<keyword id="KW-0408">Iron</keyword>
<keyword id="KW-1185">Reference proteome</keyword>
<feature type="chain" id="PRO_0000214484" description="Probable Fe(2+)-trafficking protein">
    <location>
        <begin position="1"/>
        <end position="90"/>
    </location>
</feature>
<gene>
    <name type="ordered locus">HI_0760</name>
</gene>
<reference key="1">
    <citation type="journal article" date="1995" name="Science">
        <title>Whole-genome random sequencing and assembly of Haemophilus influenzae Rd.</title>
        <authorList>
            <person name="Fleischmann R.D."/>
            <person name="Adams M.D."/>
            <person name="White O."/>
            <person name="Clayton R.A."/>
            <person name="Kirkness E.F."/>
            <person name="Kerlavage A.R."/>
            <person name="Bult C.J."/>
            <person name="Tomb J.-F."/>
            <person name="Dougherty B.A."/>
            <person name="Merrick J.M."/>
            <person name="McKenney K."/>
            <person name="Sutton G.G."/>
            <person name="FitzHugh W."/>
            <person name="Fields C.A."/>
            <person name="Gocayne J.D."/>
            <person name="Scott J.D."/>
            <person name="Shirley R."/>
            <person name="Liu L.-I."/>
            <person name="Glodek A."/>
            <person name="Kelley J.M."/>
            <person name="Weidman J.F."/>
            <person name="Phillips C.A."/>
            <person name="Spriggs T."/>
            <person name="Hedblom E."/>
            <person name="Cotton M.D."/>
            <person name="Utterback T.R."/>
            <person name="Hanna M.C."/>
            <person name="Nguyen D.T."/>
            <person name="Saudek D.M."/>
            <person name="Brandon R.C."/>
            <person name="Fine L.D."/>
            <person name="Fritchman J.L."/>
            <person name="Fuhrmann J.L."/>
            <person name="Geoghagen N.S.M."/>
            <person name="Gnehm C.L."/>
            <person name="McDonald L.A."/>
            <person name="Small K.V."/>
            <person name="Fraser C.M."/>
            <person name="Smith H.O."/>
            <person name="Venter J.C."/>
        </authorList>
    </citation>
    <scope>NUCLEOTIDE SEQUENCE [LARGE SCALE GENOMIC DNA]</scope>
    <source>
        <strain>ATCC 51907 / DSM 11121 / KW20 / Rd</strain>
    </source>
</reference>
<reference key="2">
    <citation type="journal article" date="2000" name="Electrophoresis">
        <title>Two-dimensional map of the proteome of Haemophilus influenzae.</title>
        <authorList>
            <person name="Langen H."/>
            <person name="Takacs B."/>
            <person name="Evers S."/>
            <person name="Berndt P."/>
            <person name="Lahm H.W."/>
            <person name="Wipf B."/>
            <person name="Gray C."/>
            <person name="Fountoulakis M."/>
        </authorList>
    </citation>
    <scope>IDENTIFICATION BY MASS SPECTROMETRY</scope>
    <source>
        <strain>ATCC 51907 / DSM 11121 / KW20 / Rd</strain>
    </source>
</reference>
<protein>
    <recommendedName>
        <fullName evidence="1">Probable Fe(2+)-trafficking protein</fullName>
    </recommendedName>
</protein>
<dbReference type="EMBL" id="L42023">
    <property type="protein sequence ID" value="AAC22419.1"/>
    <property type="molecule type" value="Genomic_DNA"/>
</dbReference>
<dbReference type="PIR" id="C64013">
    <property type="entry name" value="C64013"/>
</dbReference>
<dbReference type="RefSeq" id="NP_438919.1">
    <property type="nucleotide sequence ID" value="NC_000907.1"/>
</dbReference>
<dbReference type="SMR" id="P44048"/>
<dbReference type="STRING" id="71421.HI_0760"/>
<dbReference type="EnsemblBacteria" id="AAC22419">
    <property type="protein sequence ID" value="AAC22419"/>
    <property type="gene ID" value="HI_0760"/>
</dbReference>
<dbReference type="KEGG" id="hin:HI_0760"/>
<dbReference type="PATRIC" id="fig|71421.8.peg.799"/>
<dbReference type="eggNOG" id="COG2924">
    <property type="taxonomic scope" value="Bacteria"/>
</dbReference>
<dbReference type="HOGENOM" id="CLU_170994_0_0_6"/>
<dbReference type="OrthoDB" id="9804318at2"/>
<dbReference type="PhylomeDB" id="P44048"/>
<dbReference type="BioCyc" id="HINF71421:G1GJ1-798-MONOMER"/>
<dbReference type="Proteomes" id="UP000000579">
    <property type="component" value="Chromosome"/>
</dbReference>
<dbReference type="GO" id="GO:0005829">
    <property type="term" value="C:cytosol"/>
    <property type="evidence" value="ECO:0000318"/>
    <property type="project" value="GO_Central"/>
</dbReference>
<dbReference type="GO" id="GO:0005506">
    <property type="term" value="F:iron ion binding"/>
    <property type="evidence" value="ECO:0007669"/>
    <property type="project" value="UniProtKB-UniRule"/>
</dbReference>
<dbReference type="GO" id="GO:0034599">
    <property type="term" value="P:cellular response to oxidative stress"/>
    <property type="evidence" value="ECO:0000318"/>
    <property type="project" value="GO_Central"/>
</dbReference>
<dbReference type="FunFam" id="1.10.3880.10:FF:000001">
    <property type="entry name" value="Probable Fe(2+)-trafficking protein"/>
    <property type="match status" value="1"/>
</dbReference>
<dbReference type="Gene3D" id="1.10.3880.10">
    <property type="entry name" value="Fe(II) trafficking protein YggX"/>
    <property type="match status" value="1"/>
</dbReference>
<dbReference type="HAMAP" id="MF_00686">
    <property type="entry name" value="Fe_traffic_YggX"/>
    <property type="match status" value="1"/>
</dbReference>
<dbReference type="InterPro" id="IPR007457">
    <property type="entry name" value="Fe_traffick_prot_YggX"/>
</dbReference>
<dbReference type="InterPro" id="IPR036766">
    <property type="entry name" value="Fe_traffick_prot_YggX_sf"/>
</dbReference>
<dbReference type="NCBIfam" id="NF003817">
    <property type="entry name" value="PRK05408.1"/>
    <property type="match status" value="1"/>
</dbReference>
<dbReference type="PANTHER" id="PTHR36965">
    <property type="entry name" value="FE(2+)-TRAFFICKING PROTEIN-RELATED"/>
    <property type="match status" value="1"/>
</dbReference>
<dbReference type="PANTHER" id="PTHR36965:SF1">
    <property type="entry name" value="FE(2+)-TRAFFICKING PROTEIN-RELATED"/>
    <property type="match status" value="1"/>
</dbReference>
<dbReference type="Pfam" id="PF04362">
    <property type="entry name" value="Iron_traffic"/>
    <property type="match status" value="1"/>
</dbReference>
<dbReference type="PIRSF" id="PIRSF029827">
    <property type="entry name" value="Fe_traffic_YggX"/>
    <property type="match status" value="1"/>
</dbReference>
<dbReference type="SUPFAM" id="SSF111148">
    <property type="entry name" value="YggX-like"/>
    <property type="match status" value="1"/>
</dbReference>
<organism>
    <name type="scientific">Haemophilus influenzae (strain ATCC 51907 / DSM 11121 / KW20 / Rd)</name>
    <dbReference type="NCBI Taxonomy" id="71421"/>
    <lineage>
        <taxon>Bacteria</taxon>
        <taxon>Pseudomonadati</taxon>
        <taxon>Pseudomonadota</taxon>
        <taxon>Gammaproteobacteria</taxon>
        <taxon>Pasteurellales</taxon>
        <taxon>Pasteurellaceae</taxon>
        <taxon>Haemophilus</taxon>
    </lineage>
</organism>
<comment type="function">
    <text evidence="1">Could be a mediator in iron transactions between iron acquisition and iron-requiring processes, such as synthesis and/or repair of Fe-S clusters in biosynthetic enzymes.</text>
</comment>
<comment type="similarity">
    <text evidence="1">Belongs to the Fe(2+)-trafficking protein family.</text>
</comment>
<proteinExistence type="evidence at protein level"/>
<evidence type="ECO:0000255" key="1">
    <source>
        <dbReference type="HAMAP-Rule" id="MF_00686"/>
    </source>
</evidence>
<name>FETP_HAEIN</name>